<proteinExistence type="inferred from homology"/>
<feature type="initiator methionine" description="Removed" evidence="1">
    <location>
        <position position="1"/>
    </location>
</feature>
<feature type="chain" id="PRO_0000172432" description="Large ribosomal subunit protein bL32">
    <location>
        <begin position="2"/>
        <end position="57"/>
    </location>
</feature>
<protein>
    <recommendedName>
        <fullName evidence="2">Large ribosomal subunit protein bL32</fullName>
    </recommendedName>
    <alternativeName>
        <fullName>50S ribosomal protein L32</fullName>
    </alternativeName>
</protein>
<accession>Q9PQF8</accession>
<name>RL32_UREPA</name>
<sequence length="57" mass="6541">MAVQQRRVSKSRKGMRRSHDHLTISNTVACNECGKALLPHRACRDCKTYRSIKLSIK</sequence>
<organism>
    <name type="scientific">Ureaplasma parvum serovar 3 (strain ATCC 700970)</name>
    <dbReference type="NCBI Taxonomy" id="273119"/>
    <lineage>
        <taxon>Bacteria</taxon>
        <taxon>Bacillati</taxon>
        <taxon>Mycoplasmatota</taxon>
        <taxon>Mycoplasmoidales</taxon>
        <taxon>Mycoplasmoidaceae</taxon>
        <taxon>Ureaplasma</taxon>
    </lineage>
</organism>
<dbReference type="EMBL" id="AF222894">
    <property type="protein sequence ID" value="AAF30742.1"/>
    <property type="molecule type" value="Genomic_DNA"/>
</dbReference>
<dbReference type="RefSeq" id="WP_006688693.1">
    <property type="nucleotide sequence ID" value="NC_002162.1"/>
</dbReference>
<dbReference type="SMR" id="Q9PQF8"/>
<dbReference type="STRING" id="273119.UU333"/>
<dbReference type="EnsemblBacteria" id="AAF30742">
    <property type="protein sequence ID" value="AAF30742"/>
    <property type="gene ID" value="UU333"/>
</dbReference>
<dbReference type="GeneID" id="29672474"/>
<dbReference type="KEGG" id="uur:UU333"/>
<dbReference type="eggNOG" id="COG0333">
    <property type="taxonomic scope" value="Bacteria"/>
</dbReference>
<dbReference type="HOGENOM" id="CLU_129084_1_3_14"/>
<dbReference type="OrthoDB" id="9812874at2"/>
<dbReference type="Proteomes" id="UP000000423">
    <property type="component" value="Chromosome"/>
</dbReference>
<dbReference type="GO" id="GO:0015934">
    <property type="term" value="C:large ribosomal subunit"/>
    <property type="evidence" value="ECO:0007669"/>
    <property type="project" value="InterPro"/>
</dbReference>
<dbReference type="GO" id="GO:0003735">
    <property type="term" value="F:structural constituent of ribosome"/>
    <property type="evidence" value="ECO:0007669"/>
    <property type="project" value="InterPro"/>
</dbReference>
<dbReference type="GO" id="GO:0006412">
    <property type="term" value="P:translation"/>
    <property type="evidence" value="ECO:0007669"/>
    <property type="project" value="UniProtKB-UniRule"/>
</dbReference>
<dbReference type="HAMAP" id="MF_00340">
    <property type="entry name" value="Ribosomal_bL32"/>
    <property type="match status" value="1"/>
</dbReference>
<dbReference type="InterPro" id="IPR002677">
    <property type="entry name" value="Ribosomal_bL32"/>
</dbReference>
<dbReference type="InterPro" id="IPR044957">
    <property type="entry name" value="Ribosomal_bL32_bact"/>
</dbReference>
<dbReference type="InterPro" id="IPR011332">
    <property type="entry name" value="Ribosomal_zn-bd"/>
</dbReference>
<dbReference type="NCBIfam" id="TIGR01031">
    <property type="entry name" value="rpmF_bact"/>
    <property type="match status" value="1"/>
</dbReference>
<dbReference type="PANTHER" id="PTHR35534">
    <property type="entry name" value="50S RIBOSOMAL PROTEIN L32"/>
    <property type="match status" value="1"/>
</dbReference>
<dbReference type="PANTHER" id="PTHR35534:SF1">
    <property type="entry name" value="LARGE RIBOSOMAL SUBUNIT PROTEIN BL32"/>
    <property type="match status" value="1"/>
</dbReference>
<dbReference type="Pfam" id="PF01783">
    <property type="entry name" value="Ribosomal_L32p"/>
    <property type="match status" value="1"/>
</dbReference>
<dbReference type="SUPFAM" id="SSF57829">
    <property type="entry name" value="Zn-binding ribosomal proteins"/>
    <property type="match status" value="1"/>
</dbReference>
<reference key="1">
    <citation type="journal article" date="2000" name="Nature">
        <title>The complete sequence of the mucosal pathogen Ureaplasma urealyticum.</title>
        <authorList>
            <person name="Glass J.I."/>
            <person name="Lefkowitz E.J."/>
            <person name="Glass J.S."/>
            <person name="Heiner C.R."/>
            <person name="Chen E.Y."/>
            <person name="Cassell G.H."/>
        </authorList>
    </citation>
    <scope>NUCLEOTIDE SEQUENCE [LARGE SCALE GENOMIC DNA]</scope>
    <source>
        <strain>ATCC 700970</strain>
    </source>
</reference>
<evidence type="ECO:0000250" key="1"/>
<evidence type="ECO:0000305" key="2"/>
<gene>
    <name type="primary">rpmF</name>
    <name type="synonym">rpl32</name>
    <name type="ordered locus">UU333</name>
</gene>
<comment type="similarity">
    <text evidence="2">Belongs to the bacterial ribosomal protein bL32 family.</text>
</comment>
<keyword id="KW-1185">Reference proteome</keyword>
<keyword id="KW-0687">Ribonucleoprotein</keyword>
<keyword id="KW-0689">Ribosomal protein</keyword>